<gene>
    <name evidence="1" type="primary">serS</name>
    <name type="ordered locus">Sbal195_2319</name>
</gene>
<protein>
    <recommendedName>
        <fullName evidence="1">Serine--tRNA ligase</fullName>
        <ecNumber evidence="1">6.1.1.11</ecNumber>
    </recommendedName>
    <alternativeName>
        <fullName evidence="1">Seryl-tRNA synthetase</fullName>
        <shortName evidence="1">SerRS</shortName>
    </alternativeName>
    <alternativeName>
        <fullName evidence="1">Seryl-tRNA(Ser/Sec) synthetase</fullName>
    </alternativeName>
</protein>
<comment type="function">
    <text evidence="1">Catalyzes the attachment of serine to tRNA(Ser). Is also able to aminoacylate tRNA(Sec) with serine, to form the misacylated tRNA L-seryl-tRNA(Sec), which will be further converted into selenocysteinyl-tRNA(Sec).</text>
</comment>
<comment type="catalytic activity">
    <reaction evidence="1">
        <text>tRNA(Ser) + L-serine + ATP = L-seryl-tRNA(Ser) + AMP + diphosphate + H(+)</text>
        <dbReference type="Rhea" id="RHEA:12292"/>
        <dbReference type="Rhea" id="RHEA-COMP:9669"/>
        <dbReference type="Rhea" id="RHEA-COMP:9703"/>
        <dbReference type="ChEBI" id="CHEBI:15378"/>
        <dbReference type="ChEBI" id="CHEBI:30616"/>
        <dbReference type="ChEBI" id="CHEBI:33019"/>
        <dbReference type="ChEBI" id="CHEBI:33384"/>
        <dbReference type="ChEBI" id="CHEBI:78442"/>
        <dbReference type="ChEBI" id="CHEBI:78533"/>
        <dbReference type="ChEBI" id="CHEBI:456215"/>
        <dbReference type="EC" id="6.1.1.11"/>
    </reaction>
</comment>
<comment type="catalytic activity">
    <reaction evidence="1">
        <text>tRNA(Sec) + L-serine + ATP = L-seryl-tRNA(Sec) + AMP + diphosphate + H(+)</text>
        <dbReference type="Rhea" id="RHEA:42580"/>
        <dbReference type="Rhea" id="RHEA-COMP:9742"/>
        <dbReference type="Rhea" id="RHEA-COMP:10128"/>
        <dbReference type="ChEBI" id="CHEBI:15378"/>
        <dbReference type="ChEBI" id="CHEBI:30616"/>
        <dbReference type="ChEBI" id="CHEBI:33019"/>
        <dbReference type="ChEBI" id="CHEBI:33384"/>
        <dbReference type="ChEBI" id="CHEBI:78442"/>
        <dbReference type="ChEBI" id="CHEBI:78533"/>
        <dbReference type="ChEBI" id="CHEBI:456215"/>
        <dbReference type="EC" id="6.1.1.11"/>
    </reaction>
</comment>
<comment type="pathway">
    <text evidence="1">Aminoacyl-tRNA biosynthesis; selenocysteinyl-tRNA(Sec) biosynthesis; L-seryl-tRNA(Sec) from L-serine and tRNA(Sec): step 1/1.</text>
</comment>
<comment type="subunit">
    <text evidence="1">Homodimer. The tRNA molecule binds across the dimer.</text>
</comment>
<comment type="subcellular location">
    <subcellularLocation>
        <location evidence="1">Cytoplasm</location>
    </subcellularLocation>
</comment>
<comment type="domain">
    <text evidence="1">Consists of two distinct domains, a catalytic core and a N-terminal extension that is involved in tRNA binding.</text>
</comment>
<comment type="similarity">
    <text evidence="1">Belongs to the class-II aminoacyl-tRNA synthetase family. Type-1 seryl-tRNA synthetase subfamily.</text>
</comment>
<dbReference type="EC" id="6.1.1.11" evidence="1"/>
<dbReference type="EMBL" id="CP000891">
    <property type="protein sequence ID" value="ABX49487.1"/>
    <property type="molecule type" value="Genomic_DNA"/>
</dbReference>
<dbReference type="RefSeq" id="WP_006087497.1">
    <property type="nucleotide sequence ID" value="NC_009997.1"/>
</dbReference>
<dbReference type="SMR" id="A9L269"/>
<dbReference type="GeneID" id="11772447"/>
<dbReference type="KEGG" id="sbn:Sbal195_2319"/>
<dbReference type="HOGENOM" id="CLU_023797_1_1_6"/>
<dbReference type="UniPathway" id="UPA00906">
    <property type="reaction ID" value="UER00895"/>
</dbReference>
<dbReference type="Proteomes" id="UP000000770">
    <property type="component" value="Chromosome"/>
</dbReference>
<dbReference type="GO" id="GO:0005737">
    <property type="term" value="C:cytoplasm"/>
    <property type="evidence" value="ECO:0007669"/>
    <property type="project" value="UniProtKB-SubCell"/>
</dbReference>
<dbReference type="GO" id="GO:0005524">
    <property type="term" value="F:ATP binding"/>
    <property type="evidence" value="ECO:0007669"/>
    <property type="project" value="UniProtKB-UniRule"/>
</dbReference>
<dbReference type="GO" id="GO:0004828">
    <property type="term" value="F:serine-tRNA ligase activity"/>
    <property type="evidence" value="ECO:0007669"/>
    <property type="project" value="UniProtKB-UniRule"/>
</dbReference>
<dbReference type="GO" id="GO:0016260">
    <property type="term" value="P:selenocysteine biosynthetic process"/>
    <property type="evidence" value="ECO:0007669"/>
    <property type="project" value="UniProtKB-UniRule"/>
</dbReference>
<dbReference type="GO" id="GO:0006434">
    <property type="term" value="P:seryl-tRNA aminoacylation"/>
    <property type="evidence" value="ECO:0007669"/>
    <property type="project" value="UniProtKB-UniRule"/>
</dbReference>
<dbReference type="CDD" id="cd00770">
    <property type="entry name" value="SerRS_core"/>
    <property type="match status" value="1"/>
</dbReference>
<dbReference type="Gene3D" id="3.30.930.10">
    <property type="entry name" value="Bira Bifunctional Protein, Domain 2"/>
    <property type="match status" value="1"/>
</dbReference>
<dbReference type="Gene3D" id="1.10.287.40">
    <property type="entry name" value="Serine-tRNA synthetase, tRNA binding domain"/>
    <property type="match status" value="1"/>
</dbReference>
<dbReference type="HAMAP" id="MF_00176">
    <property type="entry name" value="Ser_tRNA_synth_type1"/>
    <property type="match status" value="1"/>
</dbReference>
<dbReference type="InterPro" id="IPR002314">
    <property type="entry name" value="aa-tRNA-synt_IIb"/>
</dbReference>
<dbReference type="InterPro" id="IPR006195">
    <property type="entry name" value="aa-tRNA-synth_II"/>
</dbReference>
<dbReference type="InterPro" id="IPR045864">
    <property type="entry name" value="aa-tRNA-synth_II/BPL/LPL"/>
</dbReference>
<dbReference type="InterPro" id="IPR002317">
    <property type="entry name" value="Ser-tRNA-ligase_type_1"/>
</dbReference>
<dbReference type="InterPro" id="IPR015866">
    <property type="entry name" value="Ser-tRNA-synth_1_N"/>
</dbReference>
<dbReference type="InterPro" id="IPR042103">
    <property type="entry name" value="SerRS_1_N_sf"/>
</dbReference>
<dbReference type="InterPro" id="IPR033729">
    <property type="entry name" value="SerRS_core"/>
</dbReference>
<dbReference type="InterPro" id="IPR010978">
    <property type="entry name" value="tRNA-bd_arm"/>
</dbReference>
<dbReference type="NCBIfam" id="TIGR00414">
    <property type="entry name" value="serS"/>
    <property type="match status" value="1"/>
</dbReference>
<dbReference type="PANTHER" id="PTHR43697:SF1">
    <property type="entry name" value="SERINE--TRNA LIGASE"/>
    <property type="match status" value="1"/>
</dbReference>
<dbReference type="PANTHER" id="PTHR43697">
    <property type="entry name" value="SERYL-TRNA SYNTHETASE"/>
    <property type="match status" value="1"/>
</dbReference>
<dbReference type="Pfam" id="PF02403">
    <property type="entry name" value="Seryl_tRNA_N"/>
    <property type="match status" value="1"/>
</dbReference>
<dbReference type="Pfam" id="PF00587">
    <property type="entry name" value="tRNA-synt_2b"/>
    <property type="match status" value="1"/>
</dbReference>
<dbReference type="PIRSF" id="PIRSF001529">
    <property type="entry name" value="Ser-tRNA-synth_IIa"/>
    <property type="match status" value="1"/>
</dbReference>
<dbReference type="PRINTS" id="PR00981">
    <property type="entry name" value="TRNASYNTHSER"/>
</dbReference>
<dbReference type="SUPFAM" id="SSF55681">
    <property type="entry name" value="Class II aaRS and biotin synthetases"/>
    <property type="match status" value="1"/>
</dbReference>
<dbReference type="SUPFAM" id="SSF46589">
    <property type="entry name" value="tRNA-binding arm"/>
    <property type="match status" value="1"/>
</dbReference>
<dbReference type="PROSITE" id="PS50862">
    <property type="entry name" value="AA_TRNA_LIGASE_II"/>
    <property type="match status" value="1"/>
</dbReference>
<proteinExistence type="inferred from homology"/>
<evidence type="ECO:0000255" key="1">
    <source>
        <dbReference type="HAMAP-Rule" id="MF_00176"/>
    </source>
</evidence>
<keyword id="KW-0030">Aminoacyl-tRNA synthetase</keyword>
<keyword id="KW-0067">ATP-binding</keyword>
<keyword id="KW-0963">Cytoplasm</keyword>
<keyword id="KW-0436">Ligase</keyword>
<keyword id="KW-0547">Nucleotide-binding</keyword>
<keyword id="KW-0648">Protein biosynthesis</keyword>
<accession>A9L269</accession>
<name>SYS_SHEB9</name>
<reference key="1">
    <citation type="submission" date="2007-11" db="EMBL/GenBank/DDBJ databases">
        <title>Complete sequence of chromosome of Shewanella baltica OS195.</title>
        <authorList>
            <consortium name="US DOE Joint Genome Institute"/>
            <person name="Copeland A."/>
            <person name="Lucas S."/>
            <person name="Lapidus A."/>
            <person name="Barry K."/>
            <person name="Glavina del Rio T."/>
            <person name="Dalin E."/>
            <person name="Tice H."/>
            <person name="Pitluck S."/>
            <person name="Chain P."/>
            <person name="Malfatti S."/>
            <person name="Shin M."/>
            <person name="Vergez L."/>
            <person name="Schmutz J."/>
            <person name="Larimer F."/>
            <person name="Land M."/>
            <person name="Hauser L."/>
            <person name="Kyrpides N."/>
            <person name="Kim E."/>
            <person name="Brettar I."/>
            <person name="Rodrigues J."/>
            <person name="Konstantinidis K."/>
            <person name="Klappenbach J."/>
            <person name="Hofle M."/>
            <person name="Tiedje J."/>
            <person name="Richardson P."/>
        </authorList>
    </citation>
    <scope>NUCLEOTIDE SEQUENCE [LARGE SCALE GENOMIC DNA]</scope>
    <source>
        <strain>OS195</strain>
    </source>
</reference>
<sequence length="428" mass="47087">MLDPKFLRNELEVTAERLATRGFILDIAHLTQLEEKRKSLQVATEELQASRNAISKSIGQAKARGEDVEAIMAQVGDLGSQLDAKKIELAAVLEEVNAIAMSMPNLPDESAPIGADETENVEVRRWGTPRTFDFPIKDHIDLGEGLNGLDFKNAVKITGSRFIVMKGQVARLNRAIGQFMLDLHTTEHGYTEAYVPLLVNEASLLGTGQLPKFGEDLFHTKPATEEGQGLSLIPTAEVPLTNLVRDSIVDEDELPIKLTAHTACFRSEAGSYGKDTRGLIRQHQFDKVEMVQIVKPEDSMAALEALTGHAETVLQRLGLPYRTVILCTGDMGFGSSKTYDIEVWLPAQNTYREISSCSNMKDFQARRMQARYRVKADNKPALLHTLNGSGLAVGRTLVAILENYQNADGSITIPEVLRPYMGGLTQIG</sequence>
<organism>
    <name type="scientific">Shewanella baltica (strain OS195)</name>
    <dbReference type="NCBI Taxonomy" id="399599"/>
    <lineage>
        <taxon>Bacteria</taxon>
        <taxon>Pseudomonadati</taxon>
        <taxon>Pseudomonadota</taxon>
        <taxon>Gammaproteobacteria</taxon>
        <taxon>Alteromonadales</taxon>
        <taxon>Shewanellaceae</taxon>
        <taxon>Shewanella</taxon>
    </lineage>
</organism>
<feature type="chain" id="PRO_1000077213" description="Serine--tRNA ligase">
    <location>
        <begin position="1"/>
        <end position="428"/>
    </location>
</feature>
<feature type="binding site" evidence="1">
    <location>
        <begin position="235"/>
        <end position="237"/>
    </location>
    <ligand>
        <name>L-serine</name>
        <dbReference type="ChEBI" id="CHEBI:33384"/>
    </ligand>
</feature>
<feature type="binding site" evidence="1">
    <location>
        <begin position="266"/>
        <end position="268"/>
    </location>
    <ligand>
        <name>ATP</name>
        <dbReference type="ChEBI" id="CHEBI:30616"/>
    </ligand>
</feature>
<feature type="binding site" evidence="1">
    <location>
        <position position="289"/>
    </location>
    <ligand>
        <name>L-serine</name>
        <dbReference type="ChEBI" id="CHEBI:33384"/>
    </ligand>
</feature>
<feature type="binding site" evidence="1">
    <location>
        <begin position="353"/>
        <end position="356"/>
    </location>
    <ligand>
        <name>ATP</name>
        <dbReference type="ChEBI" id="CHEBI:30616"/>
    </ligand>
</feature>
<feature type="binding site" evidence="1">
    <location>
        <position position="389"/>
    </location>
    <ligand>
        <name>L-serine</name>
        <dbReference type="ChEBI" id="CHEBI:33384"/>
    </ligand>
</feature>